<organism>
    <name type="scientific">Mycobacterium leprae (strain TN)</name>
    <dbReference type="NCBI Taxonomy" id="272631"/>
    <lineage>
        <taxon>Bacteria</taxon>
        <taxon>Bacillati</taxon>
        <taxon>Actinomycetota</taxon>
        <taxon>Actinomycetes</taxon>
        <taxon>Mycobacteriales</taxon>
        <taxon>Mycobacteriaceae</taxon>
        <taxon>Mycobacterium</taxon>
    </lineage>
</organism>
<name>GATB_MYCLE</name>
<comment type="function">
    <text evidence="1">Allows the formation of correctly charged Asn-tRNA(Asn) or Gln-tRNA(Gln) through the transamidation of misacylated Asp-tRNA(Asn) or Glu-tRNA(Gln) in organisms which lack either or both of asparaginyl-tRNA or glutaminyl-tRNA synthetases. The reaction takes place in the presence of glutamine and ATP through an activated phospho-Asp-tRNA(Asn) or phospho-Glu-tRNA(Gln) (By similarity).</text>
</comment>
<comment type="catalytic activity">
    <reaction>
        <text>L-glutamyl-tRNA(Gln) + L-glutamine + ATP + H2O = L-glutaminyl-tRNA(Gln) + L-glutamate + ADP + phosphate + H(+)</text>
        <dbReference type="Rhea" id="RHEA:17521"/>
        <dbReference type="Rhea" id="RHEA-COMP:9681"/>
        <dbReference type="Rhea" id="RHEA-COMP:9684"/>
        <dbReference type="ChEBI" id="CHEBI:15377"/>
        <dbReference type="ChEBI" id="CHEBI:15378"/>
        <dbReference type="ChEBI" id="CHEBI:29985"/>
        <dbReference type="ChEBI" id="CHEBI:30616"/>
        <dbReference type="ChEBI" id="CHEBI:43474"/>
        <dbReference type="ChEBI" id="CHEBI:58359"/>
        <dbReference type="ChEBI" id="CHEBI:78520"/>
        <dbReference type="ChEBI" id="CHEBI:78521"/>
        <dbReference type="ChEBI" id="CHEBI:456216"/>
    </reaction>
</comment>
<comment type="catalytic activity">
    <reaction>
        <text>L-aspartyl-tRNA(Asn) + L-glutamine + ATP + H2O = L-asparaginyl-tRNA(Asn) + L-glutamate + ADP + phosphate + 2 H(+)</text>
        <dbReference type="Rhea" id="RHEA:14513"/>
        <dbReference type="Rhea" id="RHEA-COMP:9674"/>
        <dbReference type="Rhea" id="RHEA-COMP:9677"/>
        <dbReference type="ChEBI" id="CHEBI:15377"/>
        <dbReference type="ChEBI" id="CHEBI:15378"/>
        <dbReference type="ChEBI" id="CHEBI:29985"/>
        <dbReference type="ChEBI" id="CHEBI:30616"/>
        <dbReference type="ChEBI" id="CHEBI:43474"/>
        <dbReference type="ChEBI" id="CHEBI:58359"/>
        <dbReference type="ChEBI" id="CHEBI:78515"/>
        <dbReference type="ChEBI" id="CHEBI:78516"/>
        <dbReference type="ChEBI" id="CHEBI:456216"/>
    </reaction>
</comment>
<comment type="subunit">
    <text evidence="1">Heterotrimer of A, B and C subunits.</text>
</comment>
<comment type="similarity">
    <text evidence="2">Belongs to the GatB/GatE family. GatB subfamily.</text>
</comment>
<gene>
    <name type="primary">gatB</name>
    <name type="ordered locus">ML1700</name>
    <name type="ORF">MLCB637.15</name>
</gene>
<feature type="chain" id="PRO_0000148813" description="Aspartyl/glutamyl-tRNA(Asn/Gln) amidotransferase subunit B">
    <location>
        <begin position="1"/>
        <end position="509"/>
    </location>
</feature>
<dbReference type="EC" id="6.3.5.-"/>
<dbReference type="EMBL" id="Z99263">
    <property type="protein sequence ID" value="CAB16430.1"/>
    <property type="molecule type" value="Genomic_DNA"/>
</dbReference>
<dbReference type="EMBL" id="AL583923">
    <property type="protein sequence ID" value="CAC30653.1"/>
    <property type="molecule type" value="Genomic_DNA"/>
</dbReference>
<dbReference type="PIR" id="T45408">
    <property type="entry name" value="T45408"/>
</dbReference>
<dbReference type="RefSeq" id="NP_302169.1">
    <property type="nucleotide sequence ID" value="NC_002677.1"/>
</dbReference>
<dbReference type="RefSeq" id="WP_010908490.1">
    <property type="nucleotide sequence ID" value="NC_002677.1"/>
</dbReference>
<dbReference type="SMR" id="O33107"/>
<dbReference type="STRING" id="272631.gene:17575545"/>
<dbReference type="KEGG" id="mle:ML1700"/>
<dbReference type="PATRIC" id="fig|272631.5.peg.3208"/>
<dbReference type="Leproma" id="ML1700"/>
<dbReference type="eggNOG" id="COG0064">
    <property type="taxonomic scope" value="Bacteria"/>
</dbReference>
<dbReference type="HOGENOM" id="CLU_019240_0_0_11"/>
<dbReference type="OrthoDB" id="9804078at2"/>
<dbReference type="Proteomes" id="UP000000806">
    <property type="component" value="Chromosome"/>
</dbReference>
<dbReference type="GO" id="GO:0050566">
    <property type="term" value="F:asparaginyl-tRNA synthase (glutamine-hydrolyzing) activity"/>
    <property type="evidence" value="ECO:0007669"/>
    <property type="project" value="RHEA"/>
</dbReference>
<dbReference type="GO" id="GO:0005524">
    <property type="term" value="F:ATP binding"/>
    <property type="evidence" value="ECO:0007669"/>
    <property type="project" value="UniProtKB-KW"/>
</dbReference>
<dbReference type="GO" id="GO:0050567">
    <property type="term" value="F:glutaminyl-tRNA synthase (glutamine-hydrolyzing) activity"/>
    <property type="evidence" value="ECO:0007669"/>
    <property type="project" value="UniProtKB-UniRule"/>
</dbReference>
<dbReference type="GO" id="GO:0070681">
    <property type="term" value="P:glutaminyl-tRNAGln biosynthesis via transamidation"/>
    <property type="evidence" value="ECO:0007669"/>
    <property type="project" value="TreeGrafter"/>
</dbReference>
<dbReference type="GO" id="GO:0006412">
    <property type="term" value="P:translation"/>
    <property type="evidence" value="ECO:0007669"/>
    <property type="project" value="UniProtKB-UniRule"/>
</dbReference>
<dbReference type="FunFam" id="1.10.10.410:FF:000002">
    <property type="entry name" value="Aspartyl/glutamyl-tRNA(Asn/Gln) amidotransferase subunit B"/>
    <property type="match status" value="1"/>
</dbReference>
<dbReference type="Gene3D" id="1.10.10.410">
    <property type="match status" value="1"/>
</dbReference>
<dbReference type="HAMAP" id="MF_00121">
    <property type="entry name" value="GatB"/>
    <property type="match status" value="1"/>
</dbReference>
<dbReference type="InterPro" id="IPR017959">
    <property type="entry name" value="Asn/Gln-tRNA_amidoTrfase_suB/E"/>
</dbReference>
<dbReference type="InterPro" id="IPR006075">
    <property type="entry name" value="Asn/Gln-tRNA_Trfase_suB/E_cat"/>
</dbReference>
<dbReference type="InterPro" id="IPR018027">
    <property type="entry name" value="Asn/Gln_amidotransferase"/>
</dbReference>
<dbReference type="InterPro" id="IPR003789">
    <property type="entry name" value="Asn/Gln_tRNA_amidoTrase-B-like"/>
</dbReference>
<dbReference type="InterPro" id="IPR004413">
    <property type="entry name" value="GatB"/>
</dbReference>
<dbReference type="InterPro" id="IPR023168">
    <property type="entry name" value="GatB_Yqey_C_2"/>
</dbReference>
<dbReference type="InterPro" id="IPR017958">
    <property type="entry name" value="Gln-tRNA_amidoTrfase_suB_CS"/>
</dbReference>
<dbReference type="InterPro" id="IPR014746">
    <property type="entry name" value="Gln_synth/guanido_kin_cat_dom"/>
</dbReference>
<dbReference type="NCBIfam" id="TIGR00133">
    <property type="entry name" value="gatB"/>
    <property type="match status" value="1"/>
</dbReference>
<dbReference type="NCBIfam" id="NF004012">
    <property type="entry name" value="PRK05477.1-2"/>
    <property type="match status" value="1"/>
</dbReference>
<dbReference type="NCBIfam" id="NF004013">
    <property type="entry name" value="PRK05477.1-3"/>
    <property type="match status" value="1"/>
</dbReference>
<dbReference type="NCBIfam" id="NF004014">
    <property type="entry name" value="PRK05477.1-4"/>
    <property type="match status" value="1"/>
</dbReference>
<dbReference type="PANTHER" id="PTHR11659">
    <property type="entry name" value="GLUTAMYL-TRNA GLN AMIDOTRANSFERASE SUBUNIT B MITOCHONDRIAL AND PROKARYOTIC PET112-RELATED"/>
    <property type="match status" value="1"/>
</dbReference>
<dbReference type="PANTHER" id="PTHR11659:SF0">
    <property type="entry name" value="GLUTAMYL-TRNA(GLN) AMIDOTRANSFERASE SUBUNIT B, MITOCHONDRIAL"/>
    <property type="match status" value="1"/>
</dbReference>
<dbReference type="Pfam" id="PF02934">
    <property type="entry name" value="GatB_N"/>
    <property type="match status" value="1"/>
</dbReference>
<dbReference type="Pfam" id="PF02637">
    <property type="entry name" value="GatB_Yqey"/>
    <property type="match status" value="1"/>
</dbReference>
<dbReference type="SMART" id="SM00845">
    <property type="entry name" value="GatB_Yqey"/>
    <property type="match status" value="1"/>
</dbReference>
<dbReference type="SUPFAM" id="SSF89095">
    <property type="entry name" value="GatB/YqeY motif"/>
    <property type="match status" value="1"/>
</dbReference>
<dbReference type="SUPFAM" id="SSF55931">
    <property type="entry name" value="Glutamine synthetase/guanido kinase"/>
    <property type="match status" value="1"/>
</dbReference>
<dbReference type="PROSITE" id="PS01234">
    <property type="entry name" value="GATB"/>
    <property type="match status" value="1"/>
</dbReference>
<accession>O33107</accession>
<protein>
    <recommendedName>
        <fullName>Aspartyl/glutamyl-tRNA(Asn/Gln) amidotransferase subunit B</fullName>
        <shortName>Asp/Glu-ADT subunit B</shortName>
        <ecNumber>6.3.5.-</ecNumber>
    </recommendedName>
</protein>
<evidence type="ECO:0000250" key="1"/>
<evidence type="ECO:0000305" key="2"/>
<sequence>MTVVSGASKASGADLLDYDVVVARFDPVFGLEVHVELSTVTKMFCGCATTFGAEPNTQVCPVCLGLPGSLPVLNRAAVQSAIRIGLALNCEIVPWCRFARKNYFYPDVPKNYQISQYDEPIAINGYLEVPLEDDTTWRVEIERAHMEEDTGKLTHLGSETGRIYGATTSLIDYNRAGVPLIEIVTKPIEGAGVRAPQIARAYVKALQDLLRTLDVSDVRMDQGSMRCDANVSLKPIGTVEFGTRSEIKNVNSLKSVEMAVRYEMQRQGAILVSGGRIAQETRHFHEDGYTSPGRAKETAQDYRYFPDPDLEPVAPSRELVEQLRQTIPELPWLSRKRIQQEWGISDEVMRDLVNAGAVELVAATVKNGASSEQARAWWGNFLVQKANEANITLDELAITPAQVAVVVALVDEGKLSIRLARQVVEGVLAGEGEPEQVMVDRDLALVRDDSVMQAAVDEALAADPDVAEKIRGGKVAAAGAIVGAVMKTTRGQADAARVRELVLAICGQG</sequence>
<keyword id="KW-0067">ATP-binding</keyword>
<keyword id="KW-0436">Ligase</keyword>
<keyword id="KW-0547">Nucleotide-binding</keyword>
<keyword id="KW-0648">Protein biosynthesis</keyword>
<keyword id="KW-1185">Reference proteome</keyword>
<reference key="1">
    <citation type="journal article" date="2001" name="Nature">
        <title>Massive gene decay in the leprosy bacillus.</title>
        <authorList>
            <person name="Cole S.T."/>
            <person name="Eiglmeier K."/>
            <person name="Parkhill J."/>
            <person name="James K.D."/>
            <person name="Thomson N.R."/>
            <person name="Wheeler P.R."/>
            <person name="Honore N."/>
            <person name="Garnier T."/>
            <person name="Churcher C.M."/>
            <person name="Harris D.E."/>
            <person name="Mungall K.L."/>
            <person name="Basham D."/>
            <person name="Brown D."/>
            <person name="Chillingworth T."/>
            <person name="Connor R."/>
            <person name="Davies R.M."/>
            <person name="Devlin K."/>
            <person name="Duthoy S."/>
            <person name="Feltwell T."/>
            <person name="Fraser A."/>
            <person name="Hamlin N."/>
            <person name="Holroyd S."/>
            <person name="Hornsby T."/>
            <person name="Jagels K."/>
            <person name="Lacroix C."/>
            <person name="Maclean J."/>
            <person name="Moule S."/>
            <person name="Murphy L.D."/>
            <person name="Oliver K."/>
            <person name="Quail M.A."/>
            <person name="Rajandream M.A."/>
            <person name="Rutherford K.M."/>
            <person name="Rutter S."/>
            <person name="Seeger K."/>
            <person name="Simon S."/>
            <person name="Simmonds M."/>
            <person name="Skelton J."/>
            <person name="Squares R."/>
            <person name="Squares S."/>
            <person name="Stevens K."/>
            <person name="Taylor K."/>
            <person name="Whitehead S."/>
            <person name="Woodward J.R."/>
            <person name="Barrell B.G."/>
        </authorList>
    </citation>
    <scope>NUCLEOTIDE SEQUENCE [LARGE SCALE GENOMIC DNA]</scope>
    <source>
        <strain>TN</strain>
    </source>
</reference>
<proteinExistence type="inferred from homology"/>